<comment type="function">
    <text evidence="1">Intracellular phospholipase B that catalyzes the double deacylation of phosphatidylcholine (PC) to glycerophosphocholine (GroPCho). Plays an important role in membrane lipid homeostasis. Responsible for the rapid PC turnover in response to inositol, elevated temperatures, or when choline is present in the growth medium (By similarity).</text>
</comment>
<comment type="catalytic activity">
    <reaction>
        <text>a 1-acyl-sn-glycero-3-phosphocholine + H2O = sn-glycerol 3-phosphocholine + a fatty acid + H(+)</text>
        <dbReference type="Rhea" id="RHEA:15177"/>
        <dbReference type="ChEBI" id="CHEBI:15377"/>
        <dbReference type="ChEBI" id="CHEBI:15378"/>
        <dbReference type="ChEBI" id="CHEBI:16870"/>
        <dbReference type="ChEBI" id="CHEBI:28868"/>
        <dbReference type="ChEBI" id="CHEBI:58168"/>
        <dbReference type="EC" id="3.1.1.5"/>
    </reaction>
</comment>
<comment type="activity regulation">
    <text evidence="1">Inhibited by organophosphorus esters.</text>
</comment>
<comment type="subcellular location">
    <subcellularLocation>
        <location evidence="1">Endoplasmic reticulum membrane</location>
        <topology evidence="1">Multi-pass membrane protein</topology>
    </subcellularLocation>
</comment>
<comment type="similarity">
    <text evidence="5">Belongs to the NTE family.</text>
</comment>
<proteinExistence type="inferred from homology"/>
<accession>Q6FKJ1</accession>
<protein>
    <recommendedName>
        <fullName>Lysophospholipase NTE1</fullName>
        <ecNumber>3.1.1.5</ecNumber>
    </recommendedName>
    <alternativeName>
        <fullName>Intracellular phospholipase B</fullName>
    </alternativeName>
    <alternativeName>
        <fullName>Neuropathy target esterase homolog</fullName>
    </alternativeName>
</protein>
<keyword id="KW-0256">Endoplasmic reticulum</keyword>
<keyword id="KW-0378">Hydrolase</keyword>
<keyword id="KW-0442">Lipid degradation</keyword>
<keyword id="KW-0443">Lipid metabolism</keyword>
<keyword id="KW-0472">Membrane</keyword>
<keyword id="KW-1185">Reference proteome</keyword>
<keyword id="KW-0677">Repeat</keyword>
<keyword id="KW-0812">Transmembrane</keyword>
<keyword id="KW-1133">Transmembrane helix</keyword>
<sequence>MDSSSIAHESDIVSTERNILPERFISNKQQGNYLEDGSGDGNGKAAEHWLLAAIFNFFWVISYFISGSTHIAFRSSWYIVSLLLLKFPKWIIVEANHIHLTIPFSVLVVTLAIIFYVSYEFLKGRLLSEYKNLTSDLNTDSLNSKNSKSSRLLHHDSKDSNTTRRRRYSSGKLLSSALHESHSGINGGDDGDDTFLSSYLDQFLSAIRIFGYLEKPVFHDLTKNMKTQKLDEGEILLLDNSVGFAIVVEGTLDIYHEVEEKGNMNDIDGDFMVDDNQSIYSILKRKKKKYSTSRHGQYNNNSDPGHYNGHNVNGDDEDDDDGILQMRSSSRNQNIPSFDAIESSSSDEESDINDGDSESQSESDDESTGFIRLKDGLGKFQLLNTVKAGNPVSSLVNILNLFTSANDNVTSPSRTGRMDSNYTNPVERPTSKLSTSIEESAMRLELGKYSLSPTEASYRSTSNPSNNFSKDNDPLSKSISGPDAVTTPSLPPLNNRAFVIPKVVARAATDCTIAIIPPQAFAKLKAKYPRSASHIIQMILTKLYHVTFQTAHKYLGLTQEIAYTELLLNRTVSYDLPNYLKEIVIDRFKDKGKDMNLQKGFQSPTSSRLTSNFNGNSNNQRTNSRNSQALMSTRDLRKTRPELSQQSSMIHSPTPITGSRHVVLESRDKYNPGDLLSNVPLSRINLASPSSRGFDYSSMKKESSPQSSVNSRKRSTTGERPRLLKRPSIYNNQSSSRSDALKGNNSNNKDINFTSFSAQEETEDSVVRMALVEAMLTYLGVNKTNMSILPGIYDGAPSEPHSHRASEISLVSSYTSSAAPQTTIRILPKEYAIVSTRKQKQSSKKRRKYKEEISPTLDYEYAKNEFAQAIELQYFKQGTVIVEQDTRGKGLYYVVSGKIDVTTSTVSDHEIFNSTRDKKKKKSKTLFTIESGGIAGYLSSLVSYKSFVTLIAKTDVYVGFLPYQTLEKLCDKYFLIYLRIAESLTSLLTPRMLKLDHALEWLHLNASDTLFNQGDPANGIYVILNGRLRQLRNPELEENSTDYPNDGEEKDSSRDSTIVMGELGQGESFGEVEVLTAMDRISSMVAVRDTELARIPRSLFELLAIEHPSIMIRVSRLVAKKILGQGQANMALPKIGSGSNLRHDLNLTIPPSSSSSIHTHSYGNDNSNQMNNANFRTITILPITSGLPVESFAMKLVHAFKQVGRTTIGLNQRTTLSHLGRHAFDKLAKLKESGYFAELEELYQTVVYIADTPVKSSWTKTCIAQADCVILLARADDSPEIGEYERLLLKSKTTSRTELVLLHNERSVEPGMTQRWLRSRSWVHNHYHIQFAMDSLVNSSNVKDTGGNIGALNLVDKFIQTELGRKTQYNISKLLPESIKMTVENFSSRFMKRKRQYYTPVHRHKDDFLRLARILSGQAIGLVLGGGGARGLSHLGILQALEERGIPIDMIGGTSIGSFVGGLYAKDYDLVPIFGRIKKFAGRISSIWRMLSDFTWPVTSYTTGHEFNRGIWKSFGDTRIEDFWVQYFCNSTNITESVQEIHSYGYAWRYVRASMSLAGLLPPIEDNGSMLLDGGYVDNLPVLEMKARGCNTIFAVDVGSVDDRTPMKYGDSLNGFWIILNRWNPFSKHPNIPTMAEIQVRLGYVSSVNALEKAKRTPGVIYVRPPIENYATLDFGKFEEIYKVGADFGKVFLQALAEEGKMPYIPGSNADLVGDVETGFFLHRRNSI</sequence>
<evidence type="ECO:0000250" key="1"/>
<evidence type="ECO:0000255" key="2"/>
<evidence type="ECO:0000255" key="3">
    <source>
        <dbReference type="PROSITE-ProRule" id="PRU01161"/>
    </source>
</evidence>
<evidence type="ECO:0000256" key="4">
    <source>
        <dbReference type="SAM" id="MobiDB-lite"/>
    </source>
</evidence>
<evidence type="ECO:0000305" key="5"/>
<name>NTE1_CANGA</name>
<dbReference type="EC" id="3.1.1.5"/>
<dbReference type="EMBL" id="CR380958">
    <property type="protein sequence ID" value="CAG62227.1"/>
    <property type="molecule type" value="Genomic_DNA"/>
</dbReference>
<dbReference type="RefSeq" id="XP_449253.1">
    <property type="nucleotide sequence ID" value="XM_449253.1"/>
</dbReference>
<dbReference type="SMR" id="Q6FKJ1"/>
<dbReference type="FunCoup" id="Q6FKJ1">
    <property type="interactions" value="140"/>
</dbReference>
<dbReference type="STRING" id="284593.Q6FKJ1"/>
<dbReference type="EnsemblFungi" id="CAGL0L11154g-T">
    <property type="protein sequence ID" value="CAGL0L11154g-T-p1"/>
    <property type="gene ID" value="CAGL0L11154g"/>
</dbReference>
<dbReference type="KEGG" id="cgr:2891028"/>
<dbReference type="CGD" id="CAL0135996">
    <property type="gene designation" value="CAGL0L11154g"/>
</dbReference>
<dbReference type="VEuPathDB" id="FungiDB:CAGL0L11154g"/>
<dbReference type="eggNOG" id="KOG2968">
    <property type="taxonomic scope" value="Eukaryota"/>
</dbReference>
<dbReference type="HOGENOM" id="CLU_000960_1_1_1"/>
<dbReference type="InParanoid" id="Q6FKJ1"/>
<dbReference type="OMA" id="SSGYVWR"/>
<dbReference type="Proteomes" id="UP000002428">
    <property type="component" value="Chromosome L"/>
</dbReference>
<dbReference type="GO" id="GO:0005789">
    <property type="term" value="C:endoplasmic reticulum membrane"/>
    <property type="evidence" value="ECO:0007669"/>
    <property type="project" value="UniProtKB-SubCell"/>
</dbReference>
<dbReference type="GO" id="GO:0004622">
    <property type="term" value="F:lysophospholipase activity"/>
    <property type="evidence" value="ECO:0007669"/>
    <property type="project" value="UniProtKB-EC"/>
</dbReference>
<dbReference type="GO" id="GO:0034638">
    <property type="term" value="P:phosphatidylcholine catabolic process"/>
    <property type="evidence" value="ECO:0007669"/>
    <property type="project" value="EnsemblFungi"/>
</dbReference>
<dbReference type="GO" id="GO:0071071">
    <property type="term" value="P:regulation of phospholipid biosynthetic process"/>
    <property type="evidence" value="ECO:0007669"/>
    <property type="project" value="EnsemblFungi"/>
</dbReference>
<dbReference type="CDD" id="cd00038">
    <property type="entry name" value="CAP_ED"/>
    <property type="match status" value="2"/>
</dbReference>
<dbReference type="CDD" id="cd07227">
    <property type="entry name" value="Pat_Fungal_NTE1"/>
    <property type="match status" value="1"/>
</dbReference>
<dbReference type="FunFam" id="3.40.1090.10:FF:000007">
    <property type="entry name" value="Lysophospholipase NTE1"/>
    <property type="match status" value="1"/>
</dbReference>
<dbReference type="FunFam" id="3.40.1090.10:FF:000013">
    <property type="entry name" value="Lysophospholipase NTE1"/>
    <property type="match status" value="1"/>
</dbReference>
<dbReference type="Gene3D" id="3.40.1090.10">
    <property type="entry name" value="Cytosolic phospholipase A2 catalytic domain"/>
    <property type="match status" value="2"/>
</dbReference>
<dbReference type="Gene3D" id="2.60.120.10">
    <property type="entry name" value="Jelly Rolls"/>
    <property type="match status" value="2"/>
</dbReference>
<dbReference type="InterPro" id="IPR016035">
    <property type="entry name" value="Acyl_Trfase/lysoPLipase"/>
</dbReference>
<dbReference type="InterPro" id="IPR000595">
    <property type="entry name" value="cNMP-bd_dom"/>
</dbReference>
<dbReference type="InterPro" id="IPR018490">
    <property type="entry name" value="cNMP-bd_dom_sf"/>
</dbReference>
<dbReference type="InterPro" id="IPR001423">
    <property type="entry name" value="LysoPLipase_patatin_CS"/>
</dbReference>
<dbReference type="InterPro" id="IPR050301">
    <property type="entry name" value="NTE"/>
</dbReference>
<dbReference type="InterPro" id="IPR056556">
    <property type="entry name" value="NTE1_P-loop_dom"/>
</dbReference>
<dbReference type="InterPro" id="IPR002641">
    <property type="entry name" value="PNPLA_dom"/>
</dbReference>
<dbReference type="InterPro" id="IPR014710">
    <property type="entry name" value="RmlC-like_jellyroll"/>
</dbReference>
<dbReference type="PANTHER" id="PTHR14226:SF29">
    <property type="entry name" value="NEUROPATHY TARGET ESTERASE SWS"/>
    <property type="match status" value="1"/>
</dbReference>
<dbReference type="PANTHER" id="PTHR14226">
    <property type="entry name" value="NEUROPATHY TARGET ESTERASE/SWISS CHEESE D.MELANOGASTER"/>
    <property type="match status" value="1"/>
</dbReference>
<dbReference type="Pfam" id="PF00027">
    <property type="entry name" value="cNMP_binding"/>
    <property type="match status" value="2"/>
</dbReference>
<dbReference type="Pfam" id="PF24179">
    <property type="entry name" value="NTE_Ploop"/>
    <property type="match status" value="1"/>
</dbReference>
<dbReference type="Pfam" id="PF01734">
    <property type="entry name" value="Patatin"/>
    <property type="match status" value="1"/>
</dbReference>
<dbReference type="SMART" id="SM00100">
    <property type="entry name" value="cNMP"/>
    <property type="match status" value="2"/>
</dbReference>
<dbReference type="SUPFAM" id="SSF51206">
    <property type="entry name" value="cAMP-binding domain-like"/>
    <property type="match status" value="4"/>
</dbReference>
<dbReference type="SUPFAM" id="SSF52151">
    <property type="entry name" value="FabD/lysophospholipase-like"/>
    <property type="match status" value="1"/>
</dbReference>
<dbReference type="PROSITE" id="PS50042">
    <property type="entry name" value="CNMP_BINDING_3"/>
    <property type="match status" value="2"/>
</dbReference>
<dbReference type="PROSITE" id="PS51635">
    <property type="entry name" value="PNPLA"/>
    <property type="match status" value="1"/>
</dbReference>
<dbReference type="PROSITE" id="PS01237">
    <property type="entry name" value="UPF0028"/>
    <property type="match status" value="1"/>
</dbReference>
<gene>
    <name type="primary">NTE1</name>
    <name type="ordered locus">CAGL0L11154g</name>
</gene>
<feature type="chain" id="PRO_0000295315" description="Lysophospholipase NTE1">
    <location>
        <begin position="1"/>
        <end position="1728"/>
    </location>
</feature>
<feature type="topological domain" description="Cytoplasmic" evidence="1">
    <location>
        <begin position="1"/>
        <end position="44"/>
    </location>
</feature>
<feature type="transmembrane region" description="Helical" evidence="2">
    <location>
        <begin position="45"/>
        <end position="65"/>
    </location>
</feature>
<feature type="topological domain" description="Lumenal" evidence="1">
    <location>
        <begin position="66"/>
        <end position="97"/>
    </location>
</feature>
<feature type="transmembrane region" description="Helical" evidence="2">
    <location>
        <begin position="98"/>
        <end position="118"/>
    </location>
</feature>
<feature type="topological domain" description="Cytoplasmic" evidence="1">
    <location>
        <begin position="119"/>
        <end position="1728"/>
    </location>
</feature>
<feature type="domain" description="PNPLA" evidence="3">
    <location>
        <begin position="1422"/>
        <end position="1586"/>
    </location>
</feature>
<feature type="region of interest" description="Disordered" evidence="4">
    <location>
        <begin position="141"/>
        <end position="167"/>
    </location>
</feature>
<feature type="region of interest" description="Disordered" evidence="4">
    <location>
        <begin position="285"/>
        <end position="368"/>
    </location>
</feature>
<feature type="region of interest" description="Disordered" evidence="4">
    <location>
        <begin position="406"/>
        <end position="436"/>
    </location>
</feature>
<feature type="region of interest" description="Disordered" evidence="4">
    <location>
        <begin position="454"/>
        <end position="488"/>
    </location>
</feature>
<feature type="region of interest" description="Disordered" evidence="4">
    <location>
        <begin position="596"/>
        <end position="660"/>
    </location>
</feature>
<feature type="region of interest" description="Disordered" evidence="4">
    <location>
        <begin position="687"/>
        <end position="756"/>
    </location>
</feature>
<feature type="region of interest" description="Disordered" evidence="4">
    <location>
        <begin position="1034"/>
        <end position="1055"/>
    </location>
</feature>
<feature type="short sequence motif" description="GXGXXG" evidence="3">
    <location>
        <begin position="1426"/>
        <end position="1431"/>
    </location>
</feature>
<feature type="short sequence motif" description="GXSXG" evidence="3">
    <location>
        <begin position="1453"/>
        <end position="1457"/>
    </location>
</feature>
<feature type="short sequence motif" description="DGA/G" evidence="3">
    <location>
        <begin position="1573"/>
        <end position="1575"/>
    </location>
</feature>
<feature type="compositionally biased region" description="Low complexity" evidence="4">
    <location>
        <begin position="141"/>
        <end position="150"/>
    </location>
</feature>
<feature type="compositionally biased region" description="Basic and acidic residues" evidence="4">
    <location>
        <begin position="153"/>
        <end position="162"/>
    </location>
</feature>
<feature type="compositionally biased region" description="Polar residues" evidence="4">
    <location>
        <begin position="293"/>
        <end position="303"/>
    </location>
</feature>
<feature type="compositionally biased region" description="Polar residues" evidence="4">
    <location>
        <begin position="326"/>
        <end position="336"/>
    </location>
</feature>
<feature type="compositionally biased region" description="Acidic residues" evidence="4">
    <location>
        <begin position="345"/>
        <end position="367"/>
    </location>
</feature>
<feature type="compositionally biased region" description="Polar residues" evidence="4">
    <location>
        <begin position="406"/>
        <end position="424"/>
    </location>
</feature>
<feature type="compositionally biased region" description="Polar residues" evidence="4">
    <location>
        <begin position="454"/>
        <end position="479"/>
    </location>
</feature>
<feature type="compositionally biased region" description="Polar residues" evidence="4">
    <location>
        <begin position="599"/>
        <end position="609"/>
    </location>
</feature>
<feature type="compositionally biased region" description="Low complexity" evidence="4">
    <location>
        <begin position="610"/>
        <end position="628"/>
    </location>
</feature>
<feature type="compositionally biased region" description="Polar residues" evidence="4">
    <location>
        <begin position="642"/>
        <end position="657"/>
    </location>
</feature>
<feature type="compositionally biased region" description="Polar residues" evidence="4">
    <location>
        <begin position="729"/>
        <end position="756"/>
    </location>
</feature>
<feature type="compositionally biased region" description="Acidic residues" evidence="4">
    <location>
        <begin position="1036"/>
        <end position="1049"/>
    </location>
</feature>
<feature type="active site" description="Nucleophile" evidence="3">
    <location>
        <position position="1455"/>
    </location>
</feature>
<feature type="active site" description="Proton acceptor" evidence="3">
    <location>
        <position position="1573"/>
    </location>
</feature>
<feature type="binding site">
    <location>
        <begin position="854"/>
        <end position="987"/>
    </location>
    <ligand>
        <name>a nucleoside 3',5'-cyclic phosphate</name>
        <dbReference type="ChEBI" id="CHEBI:58464"/>
        <label>1</label>
    </ligand>
</feature>
<feature type="binding site">
    <location>
        <begin position="983"/>
        <end position="1121"/>
    </location>
    <ligand>
        <name>a nucleoside 3',5'-cyclic phosphate</name>
        <dbReference type="ChEBI" id="CHEBI:58464"/>
        <label>2</label>
    </ligand>
</feature>
<organism>
    <name type="scientific">Candida glabrata (strain ATCC 2001 / BCRC 20586 / JCM 3761 / NBRC 0622 / NRRL Y-65 / CBS 138)</name>
    <name type="common">Yeast</name>
    <name type="synonym">Nakaseomyces glabratus</name>
    <dbReference type="NCBI Taxonomy" id="284593"/>
    <lineage>
        <taxon>Eukaryota</taxon>
        <taxon>Fungi</taxon>
        <taxon>Dikarya</taxon>
        <taxon>Ascomycota</taxon>
        <taxon>Saccharomycotina</taxon>
        <taxon>Saccharomycetes</taxon>
        <taxon>Saccharomycetales</taxon>
        <taxon>Saccharomycetaceae</taxon>
        <taxon>Nakaseomyces</taxon>
    </lineage>
</organism>
<reference key="1">
    <citation type="journal article" date="2004" name="Nature">
        <title>Genome evolution in yeasts.</title>
        <authorList>
            <person name="Dujon B."/>
            <person name="Sherman D."/>
            <person name="Fischer G."/>
            <person name="Durrens P."/>
            <person name="Casaregola S."/>
            <person name="Lafontaine I."/>
            <person name="de Montigny J."/>
            <person name="Marck C."/>
            <person name="Neuveglise C."/>
            <person name="Talla E."/>
            <person name="Goffard N."/>
            <person name="Frangeul L."/>
            <person name="Aigle M."/>
            <person name="Anthouard V."/>
            <person name="Babour A."/>
            <person name="Barbe V."/>
            <person name="Barnay S."/>
            <person name="Blanchin S."/>
            <person name="Beckerich J.-M."/>
            <person name="Beyne E."/>
            <person name="Bleykasten C."/>
            <person name="Boisrame A."/>
            <person name="Boyer J."/>
            <person name="Cattolico L."/>
            <person name="Confanioleri F."/>
            <person name="de Daruvar A."/>
            <person name="Despons L."/>
            <person name="Fabre E."/>
            <person name="Fairhead C."/>
            <person name="Ferry-Dumazet H."/>
            <person name="Groppi A."/>
            <person name="Hantraye F."/>
            <person name="Hennequin C."/>
            <person name="Jauniaux N."/>
            <person name="Joyet P."/>
            <person name="Kachouri R."/>
            <person name="Kerrest A."/>
            <person name="Koszul R."/>
            <person name="Lemaire M."/>
            <person name="Lesur I."/>
            <person name="Ma L."/>
            <person name="Muller H."/>
            <person name="Nicaud J.-M."/>
            <person name="Nikolski M."/>
            <person name="Oztas S."/>
            <person name="Ozier-Kalogeropoulos O."/>
            <person name="Pellenz S."/>
            <person name="Potier S."/>
            <person name="Richard G.-F."/>
            <person name="Straub M.-L."/>
            <person name="Suleau A."/>
            <person name="Swennen D."/>
            <person name="Tekaia F."/>
            <person name="Wesolowski-Louvel M."/>
            <person name="Westhof E."/>
            <person name="Wirth B."/>
            <person name="Zeniou-Meyer M."/>
            <person name="Zivanovic Y."/>
            <person name="Bolotin-Fukuhara M."/>
            <person name="Thierry A."/>
            <person name="Bouchier C."/>
            <person name="Caudron B."/>
            <person name="Scarpelli C."/>
            <person name="Gaillardin C."/>
            <person name="Weissenbach J."/>
            <person name="Wincker P."/>
            <person name="Souciet J.-L."/>
        </authorList>
    </citation>
    <scope>NUCLEOTIDE SEQUENCE [LARGE SCALE GENOMIC DNA]</scope>
    <source>
        <strain>ATCC 2001 / BCRC 20586 / JCM 3761 / NBRC 0622 / NRRL Y-65 / CBS 138</strain>
    </source>
</reference>